<organism>
    <name type="scientific">Tamias rufus</name>
    <name type="common">Hopi chipmunk</name>
    <name type="synonym">Neotamias rufus</name>
    <dbReference type="NCBI Taxonomy" id="123793"/>
    <lineage>
        <taxon>Eukaryota</taxon>
        <taxon>Metazoa</taxon>
        <taxon>Chordata</taxon>
        <taxon>Craniata</taxon>
        <taxon>Vertebrata</taxon>
        <taxon>Euteleostomi</taxon>
        <taxon>Mammalia</taxon>
        <taxon>Eutheria</taxon>
        <taxon>Euarchontoglires</taxon>
        <taxon>Glires</taxon>
        <taxon>Rodentia</taxon>
        <taxon>Sciuromorpha</taxon>
        <taxon>Sciuridae</taxon>
        <taxon>Xerinae</taxon>
        <taxon>Marmotini</taxon>
        <taxon>Tamias</taxon>
    </lineage>
</organism>
<protein>
    <recommendedName>
        <fullName>Cytochrome c oxidase subunit 2</fullName>
        <ecNumber>7.1.1.9</ecNumber>
    </recommendedName>
    <alternativeName>
        <fullName>Cytochrome c oxidase polypeptide II</fullName>
    </alternativeName>
</protein>
<sequence length="227" mass="25960">MAYPFELGFQDATSPIMEELLHFHDHTLMIVFLISSLVLYIISLMLTTKLTHTSTMDAQEVETIWTILPAIILILIALPSLRILYMMDEINDPSLTVKTMGHQWYWSYEYTDYEDLNFDSYMIPTSDLNPGELRLLEVDNRVVLPMELPIRMLISSEDVLHSWAVPSLGLKTDAIPGRLNQATLTSTRPGLYYGQCSEICGSNHSFMPIVLELVPLKHFENWSSSML</sequence>
<keyword id="KW-0186">Copper</keyword>
<keyword id="KW-0249">Electron transport</keyword>
<keyword id="KW-0460">Magnesium</keyword>
<keyword id="KW-0472">Membrane</keyword>
<keyword id="KW-0479">Metal-binding</keyword>
<keyword id="KW-0496">Mitochondrion</keyword>
<keyword id="KW-0999">Mitochondrion inner membrane</keyword>
<keyword id="KW-0679">Respiratory chain</keyword>
<keyword id="KW-1278">Translocase</keyword>
<keyword id="KW-0812">Transmembrane</keyword>
<keyword id="KW-1133">Transmembrane helix</keyword>
<keyword id="KW-0813">Transport</keyword>
<dbReference type="EC" id="7.1.1.9"/>
<dbReference type="EMBL" id="AF147615">
    <property type="protein sequence ID" value="AAG42608.1"/>
    <property type="molecule type" value="Genomic_DNA"/>
</dbReference>
<dbReference type="RefSeq" id="YP_009332039.1">
    <property type="nucleotide sequence ID" value="NC_032371.1"/>
</dbReference>
<dbReference type="SMR" id="Q9G1N5"/>
<dbReference type="GeneID" id="30688832"/>
<dbReference type="CTD" id="4513"/>
<dbReference type="GO" id="GO:0005743">
    <property type="term" value="C:mitochondrial inner membrane"/>
    <property type="evidence" value="ECO:0007669"/>
    <property type="project" value="UniProtKB-SubCell"/>
</dbReference>
<dbReference type="GO" id="GO:0045277">
    <property type="term" value="C:respiratory chain complex IV"/>
    <property type="evidence" value="ECO:0000250"/>
    <property type="project" value="UniProtKB"/>
</dbReference>
<dbReference type="GO" id="GO:0005507">
    <property type="term" value="F:copper ion binding"/>
    <property type="evidence" value="ECO:0007669"/>
    <property type="project" value="InterPro"/>
</dbReference>
<dbReference type="GO" id="GO:0004129">
    <property type="term" value="F:cytochrome-c oxidase activity"/>
    <property type="evidence" value="ECO:0007669"/>
    <property type="project" value="UniProtKB-EC"/>
</dbReference>
<dbReference type="GO" id="GO:0042773">
    <property type="term" value="P:ATP synthesis coupled electron transport"/>
    <property type="evidence" value="ECO:0007669"/>
    <property type="project" value="TreeGrafter"/>
</dbReference>
<dbReference type="CDD" id="cd13912">
    <property type="entry name" value="CcO_II_C"/>
    <property type="match status" value="1"/>
</dbReference>
<dbReference type="FunFam" id="1.10.287.90:FF:000001">
    <property type="entry name" value="Cytochrome c oxidase subunit 2"/>
    <property type="match status" value="1"/>
</dbReference>
<dbReference type="FunFam" id="2.60.40.420:FF:000001">
    <property type="entry name" value="Cytochrome c oxidase subunit 2"/>
    <property type="match status" value="1"/>
</dbReference>
<dbReference type="Gene3D" id="1.10.287.90">
    <property type="match status" value="1"/>
</dbReference>
<dbReference type="Gene3D" id="2.60.40.420">
    <property type="entry name" value="Cupredoxins - blue copper proteins"/>
    <property type="match status" value="1"/>
</dbReference>
<dbReference type="InterPro" id="IPR045187">
    <property type="entry name" value="CcO_II"/>
</dbReference>
<dbReference type="InterPro" id="IPR002429">
    <property type="entry name" value="CcO_II-like_C"/>
</dbReference>
<dbReference type="InterPro" id="IPR034210">
    <property type="entry name" value="CcO_II_C"/>
</dbReference>
<dbReference type="InterPro" id="IPR001505">
    <property type="entry name" value="Copper_CuA"/>
</dbReference>
<dbReference type="InterPro" id="IPR008972">
    <property type="entry name" value="Cupredoxin"/>
</dbReference>
<dbReference type="InterPro" id="IPR014222">
    <property type="entry name" value="Cyt_c_oxidase_su2"/>
</dbReference>
<dbReference type="InterPro" id="IPR011759">
    <property type="entry name" value="Cyt_c_oxidase_su2_TM_dom"/>
</dbReference>
<dbReference type="InterPro" id="IPR036257">
    <property type="entry name" value="Cyt_c_oxidase_su2_TM_sf"/>
</dbReference>
<dbReference type="NCBIfam" id="TIGR02866">
    <property type="entry name" value="CoxB"/>
    <property type="match status" value="1"/>
</dbReference>
<dbReference type="PANTHER" id="PTHR22888:SF9">
    <property type="entry name" value="CYTOCHROME C OXIDASE SUBUNIT 2"/>
    <property type="match status" value="1"/>
</dbReference>
<dbReference type="PANTHER" id="PTHR22888">
    <property type="entry name" value="CYTOCHROME C OXIDASE, SUBUNIT II"/>
    <property type="match status" value="1"/>
</dbReference>
<dbReference type="Pfam" id="PF00116">
    <property type="entry name" value="COX2"/>
    <property type="match status" value="1"/>
</dbReference>
<dbReference type="Pfam" id="PF02790">
    <property type="entry name" value="COX2_TM"/>
    <property type="match status" value="1"/>
</dbReference>
<dbReference type="PRINTS" id="PR01166">
    <property type="entry name" value="CYCOXIDASEII"/>
</dbReference>
<dbReference type="SUPFAM" id="SSF49503">
    <property type="entry name" value="Cupredoxins"/>
    <property type="match status" value="1"/>
</dbReference>
<dbReference type="SUPFAM" id="SSF81464">
    <property type="entry name" value="Cytochrome c oxidase subunit II-like, transmembrane region"/>
    <property type="match status" value="1"/>
</dbReference>
<dbReference type="PROSITE" id="PS00078">
    <property type="entry name" value="COX2"/>
    <property type="match status" value="1"/>
</dbReference>
<dbReference type="PROSITE" id="PS50857">
    <property type="entry name" value="COX2_CUA"/>
    <property type="match status" value="1"/>
</dbReference>
<dbReference type="PROSITE" id="PS50999">
    <property type="entry name" value="COX2_TM"/>
    <property type="match status" value="1"/>
</dbReference>
<accession>Q9G1N5</accession>
<reference key="1">
    <citation type="journal article" date="2000" name="J. Mammal. Evol.">
        <title>Molecular phylogeny of the chipmunk genus Tamias based on the mitochondrial cytochrome oxidase subunit II gene.</title>
        <authorList>
            <person name="Piaggio A.J."/>
            <person name="Spicer G.S."/>
        </authorList>
    </citation>
    <scope>NUCLEOTIDE SEQUENCE [GENOMIC DNA]</scope>
</reference>
<proteinExistence type="inferred from homology"/>
<comment type="function">
    <text evidence="2">Component of the cytochrome c oxidase, the last enzyme in the mitochondrial electron transport chain which drives oxidative phosphorylation. The respiratory chain contains 3 multisubunit complexes succinate dehydrogenase (complex II, CII), ubiquinol-cytochrome c oxidoreductase (cytochrome b-c1 complex, complex III, CIII) and cytochrome c oxidase (complex IV, CIV), that cooperate to transfer electrons derived from NADH and succinate to molecular oxygen, creating an electrochemical gradient over the inner membrane that drives transmembrane transport and the ATP synthase. Cytochrome c oxidase is the component of the respiratory chain that catalyzes the reduction of oxygen to water. Electrons originating from reduced cytochrome c in the intermembrane space (IMS) are transferred via the dinuclear copper A center (CU(A)) of subunit 2 and heme A of subunit 1 to the active site in subunit 1, a binuclear center (BNC) formed by heme A3 and copper B (CU(B)). The BNC reduces molecular oxygen to 2 water molecules using 4 electrons from cytochrome c in the IMS and 4 protons from the mitochondrial matrix.</text>
</comment>
<comment type="catalytic activity">
    <reaction evidence="2">
        <text>4 Fe(II)-[cytochrome c] + O2 + 8 H(+)(in) = 4 Fe(III)-[cytochrome c] + 2 H2O + 4 H(+)(out)</text>
        <dbReference type="Rhea" id="RHEA:11436"/>
        <dbReference type="Rhea" id="RHEA-COMP:10350"/>
        <dbReference type="Rhea" id="RHEA-COMP:14399"/>
        <dbReference type="ChEBI" id="CHEBI:15377"/>
        <dbReference type="ChEBI" id="CHEBI:15378"/>
        <dbReference type="ChEBI" id="CHEBI:15379"/>
        <dbReference type="ChEBI" id="CHEBI:29033"/>
        <dbReference type="ChEBI" id="CHEBI:29034"/>
        <dbReference type="EC" id="7.1.1.9"/>
    </reaction>
    <physiologicalReaction direction="left-to-right" evidence="2">
        <dbReference type="Rhea" id="RHEA:11437"/>
    </physiologicalReaction>
</comment>
<comment type="cofactor">
    <cofactor evidence="3">
        <name>Cu cation</name>
        <dbReference type="ChEBI" id="CHEBI:23378"/>
    </cofactor>
    <text evidence="3">Binds a dinuclear copper A center per subunit.</text>
</comment>
<comment type="subunit">
    <text evidence="1 3">Component of the cytochrome c oxidase (complex IV, CIV), a multisubunit enzyme composed of 14 subunits. The complex is composed of a catalytic core of 3 subunits MT-CO1, MT-CO2 and MT-CO3, encoded in the mitochondrial DNA, and 11 supernumerary subunits COX4I, COX5A, COX5B, COX6A, COX6B, COX6C, COX7A, COX7B, COX7C, COX8 and NDUFA4, which are encoded in the nuclear genome. The complex exists as a monomer or a dimer and forms supercomplexes (SCs) in the inner mitochondrial membrane with NADH-ubiquinone oxidoreductase (complex I, CI) and ubiquinol-cytochrome c oxidoreductase (cytochrome b-c1 complex, complex III, CIII), resulting in different assemblies (supercomplex SCI(1)III(2)IV(1) and megacomplex MCI(2)III(2)IV(2)) (By similarity). Found in a complex with TMEM177, COA6, COX18, COX20, SCO1 and SCO2. Interacts with TMEM177 in a COX20-dependent manner. Interacts with COX20. Interacts with COX16 (By similarity).</text>
</comment>
<comment type="subcellular location">
    <subcellularLocation>
        <location evidence="3">Mitochondrion inner membrane</location>
        <topology evidence="3">Multi-pass membrane protein</topology>
    </subcellularLocation>
</comment>
<comment type="similarity">
    <text evidence="4">Belongs to the cytochrome c oxidase subunit 2 family.</text>
</comment>
<feature type="chain" id="PRO_0000257859" description="Cytochrome c oxidase subunit 2">
    <location>
        <begin position="1"/>
        <end position="227"/>
    </location>
</feature>
<feature type="topological domain" description="Mitochondrial intermembrane" evidence="3">
    <location>
        <begin position="1"/>
        <end position="14"/>
    </location>
</feature>
<feature type="transmembrane region" description="Helical; Name=I" evidence="3">
    <location>
        <begin position="15"/>
        <end position="45"/>
    </location>
</feature>
<feature type="topological domain" description="Mitochondrial matrix" evidence="3">
    <location>
        <begin position="46"/>
        <end position="59"/>
    </location>
</feature>
<feature type="transmembrane region" description="Helical; Name=II" evidence="3">
    <location>
        <begin position="60"/>
        <end position="87"/>
    </location>
</feature>
<feature type="topological domain" description="Mitochondrial intermembrane" evidence="3">
    <location>
        <begin position="88"/>
        <end position="227"/>
    </location>
</feature>
<feature type="binding site" evidence="3">
    <location>
        <position position="161"/>
    </location>
    <ligand>
        <name>Cu cation</name>
        <dbReference type="ChEBI" id="CHEBI:23378"/>
        <label>A1</label>
    </ligand>
</feature>
<feature type="binding site" evidence="3">
    <location>
        <position position="196"/>
    </location>
    <ligand>
        <name>Cu cation</name>
        <dbReference type="ChEBI" id="CHEBI:23378"/>
        <label>A1</label>
    </ligand>
</feature>
<feature type="binding site" evidence="3">
    <location>
        <position position="196"/>
    </location>
    <ligand>
        <name>Cu cation</name>
        <dbReference type="ChEBI" id="CHEBI:23378"/>
        <label>A2</label>
    </ligand>
</feature>
<feature type="binding site" evidence="3">
    <location>
        <position position="198"/>
    </location>
    <ligand>
        <name>Cu cation</name>
        <dbReference type="ChEBI" id="CHEBI:23378"/>
        <label>A2</label>
    </ligand>
</feature>
<feature type="binding site" evidence="3">
    <location>
        <position position="198"/>
    </location>
    <ligand>
        <name>Mg(2+)</name>
        <dbReference type="ChEBI" id="CHEBI:18420"/>
        <note>ligand shared with MT-CO1</note>
    </ligand>
</feature>
<feature type="binding site" evidence="3">
    <location>
        <position position="200"/>
    </location>
    <ligand>
        <name>Cu cation</name>
        <dbReference type="ChEBI" id="CHEBI:23378"/>
        <label>A1</label>
    </ligand>
</feature>
<feature type="binding site" evidence="3">
    <location>
        <position position="200"/>
    </location>
    <ligand>
        <name>Cu cation</name>
        <dbReference type="ChEBI" id="CHEBI:23378"/>
        <label>A2</label>
    </ligand>
</feature>
<feature type="binding site" evidence="3">
    <location>
        <position position="204"/>
    </location>
    <ligand>
        <name>Cu cation</name>
        <dbReference type="ChEBI" id="CHEBI:23378"/>
        <label>A2</label>
    </ligand>
</feature>
<feature type="binding site" evidence="3">
    <location>
        <position position="207"/>
    </location>
    <ligand>
        <name>Cu cation</name>
        <dbReference type="ChEBI" id="CHEBI:23378"/>
        <label>A1</label>
    </ligand>
</feature>
<evidence type="ECO:0000250" key="1">
    <source>
        <dbReference type="UniProtKB" id="P00403"/>
    </source>
</evidence>
<evidence type="ECO:0000250" key="2">
    <source>
        <dbReference type="UniProtKB" id="P00410"/>
    </source>
</evidence>
<evidence type="ECO:0000250" key="3">
    <source>
        <dbReference type="UniProtKB" id="P68530"/>
    </source>
</evidence>
<evidence type="ECO:0000305" key="4"/>
<geneLocation type="mitochondrion"/>
<name>COX2_TAMRF</name>
<gene>
    <name type="primary">MT-CO2</name>
    <name type="synonym">COII</name>
    <name type="synonym">COX2</name>
    <name type="synonym">COXII</name>
    <name type="synonym">MTCO2</name>
</gene>